<accession>B7MF40</accession>
<evidence type="ECO:0000255" key="1">
    <source>
        <dbReference type="HAMAP-Rule" id="MF_01362"/>
    </source>
</evidence>
<reference key="1">
    <citation type="journal article" date="2009" name="PLoS Genet.">
        <title>Organised genome dynamics in the Escherichia coli species results in highly diverse adaptive paths.</title>
        <authorList>
            <person name="Touchon M."/>
            <person name="Hoede C."/>
            <person name="Tenaillon O."/>
            <person name="Barbe V."/>
            <person name="Baeriswyl S."/>
            <person name="Bidet P."/>
            <person name="Bingen E."/>
            <person name="Bonacorsi S."/>
            <person name="Bouchier C."/>
            <person name="Bouvet O."/>
            <person name="Calteau A."/>
            <person name="Chiapello H."/>
            <person name="Clermont O."/>
            <person name="Cruveiller S."/>
            <person name="Danchin A."/>
            <person name="Diard M."/>
            <person name="Dossat C."/>
            <person name="Karoui M.E."/>
            <person name="Frapy E."/>
            <person name="Garry L."/>
            <person name="Ghigo J.M."/>
            <person name="Gilles A.M."/>
            <person name="Johnson J."/>
            <person name="Le Bouguenec C."/>
            <person name="Lescat M."/>
            <person name="Mangenot S."/>
            <person name="Martinez-Jehanne V."/>
            <person name="Matic I."/>
            <person name="Nassif X."/>
            <person name="Oztas S."/>
            <person name="Petit M.A."/>
            <person name="Pichon C."/>
            <person name="Rouy Z."/>
            <person name="Ruf C.S."/>
            <person name="Schneider D."/>
            <person name="Tourret J."/>
            <person name="Vacherie B."/>
            <person name="Vallenet D."/>
            <person name="Medigue C."/>
            <person name="Rocha E.P.C."/>
            <person name="Denamur E."/>
        </authorList>
    </citation>
    <scope>NUCLEOTIDE SEQUENCE [LARGE SCALE GENOMIC DNA]</scope>
    <source>
        <strain>S88 / ExPEC</strain>
    </source>
</reference>
<dbReference type="EMBL" id="CU928161">
    <property type="protein sequence ID" value="CAR03555.1"/>
    <property type="molecule type" value="Genomic_DNA"/>
</dbReference>
<dbReference type="RefSeq" id="WP_001216963.1">
    <property type="nucleotide sequence ID" value="NC_011742.1"/>
</dbReference>
<dbReference type="KEGG" id="ecz:ECS88_2271"/>
<dbReference type="HOGENOM" id="CLU_220259_0_0_6"/>
<dbReference type="Proteomes" id="UP000000747">
    <property type="component" value="Chromosome"/>
</dbReference>
<dbReference type="GO" id="GO:0005886">
    <property type="term" value="C:plasma membrane"/>
    <property type="evidence" value="ECO:0007669"/>
    <property type="project" value="UniProtKB-SubCell"/>
</dbReference>
<dbReference type="HAMAP" id="MF_01362">
    <property type="entry name" value="UPF0387"/>
    <property type="match status" value="1"/>
</dbReference>
<dbReference type="InterPro" id="IPR020870">
    <property type="entry name" value="UPF0387_membrane"/>
</dbReference>
<dbReference type="NCBIfam" id="NF010225">
    <property type="entry name" value="PRK13681.1"/>
    <property type="match status" value="1"/>
</dbReference>
<sequence>MRIAKIGVIALFLFMALGGIGGVMLAGYTFILRAG</sequence>
<organism>
    <name type="scientific">Escherichia coli O45:K1 (strain S88 / ExPEC)</name>
    <dbReference type="NCBI Taxonomy" id="585035"/>
    <lineage>
        <taxon>Bacteria</taxon>
        <taxon>Pseudomonadati</taxon>
        <taxon>Pseudomonadota</taxon>
        <taxon>Gammaproteobacteria</taxon>
        <taxon>Enterobacterales</taxon>
        <taxon>Enterobacteriaceae</taxon>
        <taxon>Escherichia</taxon>
    </lineage>
</organism>
<comment type="subcellular location">
    <subcellularLocation>
        <location evidence="1">Cell inner membrane</location>
        <topology evidence="1">Single-pass membrane protein</topology>
    </subcellularLocation>
</comment>
<comment type="similarity">
    <text evidence="1">Belongs to the UPF0387 family.</text>
</comment>
<gene>
    <name evidence="1" type="primary">yohO</name>
    <name type="ordered locus">ECS88_2271</name>
</gene>
<name>YOHO_ECO45</name>
<proteinExistence type="inferred from homology"/>
<protein>
    <recommendedName>
        <fullName evidence="1">UPF0387 membrane protein YohO</fullName>
    </recommendedName>
</protein>
<keyword id="KW-0997">Cell inner membrane</keyword>
<keyword id="KW-1003">Cell membrane</keyword>
<keyword id="KW-0472">Membrane</keyword>
<keyword id="KW-1185">Reference proteome</keyword>
<keyword id="KW-0812">Transmembrane</keyword>
<keyword id="KW-1133">Transmembrane helix</keyword>
<feature type="chain" id="PRO_1000143731" description="UPF0387 membrane protein YohO">
    <location>
        <begin position="1"/>
        <end position="35"/>
    </location>
</feature>
<feature type="transmembrane region" description="Helical" evidence="1">
    <location>
        <begin position="6"/>
        <end position="26"/>
    </location>
</feature>